<protein>
    <recommendedName>
        <fullName>Mitogen-activated protein kinase 8</fullName>
        <shortName>MAP kinase 8</shortName>
        <shortName>MAPK 8</shortName>
        <ecNumber>2.7.11.24</ecNumber>
    </recommendedName>
    <alternativeName>
        <fullName>Stress-activated protein kinase JNK1</fullName>
    </alternativeName>
    <alternativeName>
        <fullName>c-Jun N-terminal kinase 1</fullName>
    </alternativeName>
</protein>
<keyword id="KW-0067">ATP-binding</keyword>
<keyword id="KW-0090">Biological rhythms</keyword>
<keyword id="KW-0963">Cytoplasm</keyword>
<keyword id="KW-0418">Kinase</keyword>
<keyword id="KW-0547">Nucleotide-binding</keyword>
<keyword id="KW-0539">Nucleus</keyword>
<keyword id="KW-0597">Phosphoprotein</keyword>
<keyword id="KW-1185">Reference proteome</keyword>
<keyword id="KW-0723">Serine/threonine-protein kinase</keyword>
<keyword id="KW-0770">Synapse</keyword>
<keyword id="KW-0808">Transferase</keyword>
<accession>Q9DGD9</accession>
<reference evidence="8" key="1">
    <citation type="journal article" date="2000" name="J. Cell Biol.">
        <title>Asymmetric p38 activation in zebrafish: its possible role in symmetric and synchronous cleavage.</title>
        <authorList>
            <person name="Fujii R."/>
            <person name="Yamashita S."/>
            <person name="Hibi M."/>
            <person name="Hirano T."/>
        </authorList>
    </citation>
    <scope>NUCLEOTIDE SEQUENCE [MRNA]</scope>
    <scope>DEVELOPMENTAL STAGE</scope>
    <source>
        <tissue>Embryo</tissue>
    </source>
</reference>
<organism evidence="9">
    <name type="scientific">Danio rerio</name>
    <name type="common">Zebrafish</name>
    <name type="synonym">Brachydanio rerio</name>
    <dbReference type="NCBI Taxonomy" id="7955"/>
    <lineage>
        <taxon>Eukaryota</taxon>
        <taxon>Metazoa</taxon>
        <taxon>Chordata</taxon>
        <taxon>Craniata</taxon>
        <taxon>Vertebrata</taxon>
        <taxon>Euteleostomi</taxon>
        <taxon>Actinopterygii</taxon>
        <taxon>Neopterygii</taxon>
        <taxon>Teleostei</taxon>
        <taxon>Ostariophysi</taxon>
        <taxon>Cypriniformes</taxon>
        <taxon>Danionidae</taxon>
        <taxon>Danioninae</taxon>
        <taxon>Danio</taxon>
    </lineage>
</organism>
<name>MK08_DANRE</name>
<sequence>MNRNKREKEYYSIDVGDSTFTVLKRYQNLRPIGSGAQGIVCSAYDHVLDRNVAIKKLSRPFQNQTHAKRAYRELVLMKCVNHKNIIGLLNVFTPQKTLEEFQDVYLVMELMDANLCQVIQMELDHERLSYLLYQMLCGIKHLHAAGIIHRDLKPSNIVVKSDCTLKILDFGLARTAATGLLMTPYVVTRYYRAPEVILGMGYQANVDVWSIGCIMAEMVRGSVLFPGTDHIDQWNKVIEQLGTPSQEFMMKLNQSVRTYVENRPRYAGYSFEKLFPDVLFPADSDHNKLKASQARDLLSKMLVIDASKRISVDEALQHPYINVWYDPSEVEAPPPAITDKQLDEREHSVEEWKELIYKEVLEWEERTKNGVIRGQPASLAQVQQ</sequence>
<proteinExistence type="evidence at transcript level"/>
<gene>
    <name type="primary">mapk8</name>
    <name type="synonym">jnk1</name>
</gene>
<comment type="function">
    <text evidence="2 4">Responds to activation by environmental stress and pro-inflammatory cytokines by phosphorylating a number of transcription factors, primarily components of AP-1 such as c-Jun and ATF2 and thus regulates AP-1 transcriptional activity. May play a role in the regulation of the circadian clock.</text>
</comment>
<comment type="catalytic activity">
    <reaction>
        <text>L-seryl-[protein] + ATP = O-phospho-L-seryl-[protein] + ADP + H(+)</text>
        <dbReference type="Rhea" id="RHEA:17989"/>
        <dbReference type="Rhea" id="RHEA-COMP:9863"/>
        <dbReference type="Rhea" id="RHEA-COMP:11604"/>
        <dbReference type="ChEBI" id="CHEBI:15378"/>
        <dbReference type="ChEBI" id="CHEBI:29999"/>
        <dbReference type="ChEBI" id="CHEBI:30616"/>
        <dbReference type="ChEBI" id="CHEBI:83421"/>
        <dbReference type="ChEBI" id="CHEBI:456216"/>
        <dbReference type="EC" id="2.7.11.24"/>
    </reaction>
</comment>
<comment type="catalytic activity">
    <reaction>
        <text>L-threonyl-[protein] + ATP = O-phospho-L-threonyl-[protein] + ADP + H(+)</text>
        <dbReference type="Rhea" id="RHEA:46608"/>
        <dbReference type="Rhea" id="RHEA-COMP:11060"/>
        <dbReference type="Rhea" id="RHEA-COMP:11605"/>
        <dbReference type="ChEBI" id="CHEBI:15378"/>
        <dbReference type="ChEBI" id="CHEBI:30013"/>
        <dbReference type="ChEBI" id="CHEBI:30616"/>
        <dbReference type="ChEBI" id="CHEBI:61977"/>
        <dbReference type="ChEBI" id="CHEBI:456216"/>
        <dbReference type="EC" id="2.7.11.24"/>
    </reaction>
</comment>
<comment type="cofactor">
    <cofactor evidence="2">
        <name>Mg(2+)</name>
        <dbReference type="ChEBI" id="CHEBI:18420"/>
    </cofactor>
</comment>
<comment type="activity regulation">
    <text evidence="2">Activated by threonine and tyrosine phosphorylation.</text>
</comment>
<comment type="subcellular location">
    <subcellularLocation>
        <location evidence="3">Cytoplasm</location>
    </subcellularLocation>
    <subcellularLocation>
        <location evidence="4">Nucleus</location>
    </subcellularLocation>
    <subcellularLocation>
        <location evidence="3">Synapse</location>
    </subcellularLocation>
</comment>
<comment type="developmental stage">
    <text evidence="7">Expressed in the nervous system during embryogenic stage 21. Expression decreases from stage 25 onwards.</text>
</comment>
<comment type="domain">
    <text>The TXY motif contains the threonine and tyrosine residues whose phosphorylation activates the MAP kinases.</text>
</comment>
<comment type="PTM">
    <text evidence="1">Dually phosphorylated on Thr-183 and Tyr-185, which activates the enzyme.</text>
</comment>
<comment type="similarity">
    <text evidence="8">Belongs to the protein kinase superfamily. CMGC Ser/Thr protein kinase family. MAP kinase subfamily.</text>
</comment>
<dbReference type="EC" id="2.7.11.24"/>
<dbReference type="EMBL" id="AB030900">
    <property type="protein sequence ID" value="BAB11810.1"/>
    <property type="molecule type" value="mRNA"/>
</dbReference>
<dbReference type="RefSeq" id="NP_571796.1">
    <property type="nucleotide sequence ID" value="NM_131721.2"/>
</dbReference>
<dbReference type="SMR" id="Q9DGD9"/>
<dbReference type="FunCoup" id="Q9DGD9">
    <property type="interactions" value="1809"/>
</dbReference>
<dbReference type="STRING" id="7955.ENSDARP00000012611"/>
<dbReference type="PaxDb" id="7955-ENSDARP00000111769"/>
<dbReference type="Ensembl" id="ENSDART00000022471">
    <property type="protein sequence ID" value="ENSDARP00000012611"/>
    <property type="gene ID" value="ENSDARG00000009870"/>
</dbReference>
<dbReference type="GeneID" id="65236"/>
<dbReference type="KEGG" id="dre:65236"/>
<dbReference type="AGR" id="ZFIN:ZDB-GENE-010202-1"/>
<dbReference type="CTD" id="65236"/>
<dbReference type="ZFIN" id="ZDB-GENE-010202-1">
    <property type="gene designation" value="mapk8b"/>
</dbReference>
<dbReference type="eggNOG" id="KOG0665">
    <property type="taxonomic scope" value="Eukaryota"/>
</dbReference>
<dbReference type="InParanoid" id="Q9DGD9"/>
<dbReference type="OrthoDB" id="192887at2759"/>
<dbReference type="PhylomeDB" id="Q9DGD9"/>
<dbReference type="TreeFam" id="TF105100"/>
<dbReference type="BRENDA" id="2.7.11.24">
    <property type="organism ID" value="928"/>
</dbReference>
<dbReference type="Reactome" id="R-DRE-193648">
    <property type="pathway name" value="NRAGE signals death through JNK"/>
</dbReference>
<dbReference type="Reactome" id="R-DRE-2559580">
    <property type="pathway name" value="Oxidative Stress Induced Senescence"/>
</dbReference>
<dbReference type="Reactome" id="R-DRE-2871796">
    <property type="pathway name" value="FCERI mediated MAPK activation"/>
</dbReference>
<dbReference type="Reactome" id="R-DRE-450321">
    <property type="pathway name" value="JNK (c-Jun kinases) phosphorylation and activation mediated by activated human TAK1"/>
</dbReference>
<dbReference type="Reactome" id="R-DRE-450341">
    <property type="pathway name" value="Activation of the AP-1 family of transcription factors"/>
</dbReference>
<dbReference type="Reactome" id="R-DRE-9007892">
    <property type="pathway name" value="Interleukin-38 signaling"/>
</dbReference>
<dbReference type="SignaLink" id="Q9DGD9"/>
<dbReference type="PRO" id="PR:Q9DGD9"/>
<dbReference type="Proteomes" id="UP000000437">
    <property type="component" value="Chromosome 12"/>
</dbReference>
<dbReference type="Bgee" id="ENSDARG00000009870">
    <property type="expression patterns" value="Expressed in retina and 25 other cell types or tissues"/>
</dbReference>
<dbReference type="ExpressionAtlas" id="Q9DGD9">
    <property type="expression patterns" value="baseline and differential"/>
</dbReference>
<dbReference type="GO" id="GO:0005737">
    <property type="term" value="C:cytoplasm"/>
    <property type="evidence" value="ECO:0000318"/>
    <property type="project" value="GO_Central"/>
</dbReference>
<dbReference type="GO" id="GO:0005634">
    <property type="term" value="C:nucleus"/>
    <property type="evidence" value="ECO:0000318"/>
    <property type="project" value="GO_Central"/>
</dbReference>
<dbReference type="GO" id="GO:0045202">
    <property type="term" value="C:synapse"/>
    <property type="evidence" value="ECO:0000250"/>
    <property type="project" value="UniProtKB"/>
</dbReference>
<dbReference type="GO" id="GO:0005524">
    <property type="term" value="F:ATP binding"/>
    <property type="evidence" value="ECO:0007669"/>
    <property type="project" value="UniProtKB-KW"/>
</dbReference>
<dbReference type="GO" id="GO:0004705">
    <property type="term" value="F:JUN kinase activity"/>
    <property type="evidence" value="ECO:0000318"/>
    <property type="project" value="GO_Central"/>
</dbReference>
<dbReference type="GO" id="GO:0106310">
    <property type="term" value="F:protein serine kinase activity"/>
    <property type="evidence" value="ECO:0007669"/>
    <property type="project" value="RHEA"/>
</dbReference>
<dbReference type="GO" id="GO:0004674">
    <property type="term" value="F:protein serine/threonine kinase activity"/>
    <property type="evidence" value="ECO:0000250"/>
    <property type="project" value="UniProtKB"/>
</dbReference>
<dbReference type="GO" id="GO:0048263">
    <property type="term" value="P:determination of dorsal identity"/>
    <property type="evidence" value="ECO:0000315"/>
    <property type="project" value="MGI"/>
</dbReference>
<dbReference type="GO" id="GO:0007254">
    <property type="term" value="P:JNK cascade"/>
    <property type="evidence" value="ECO:0000315"/>
    <property type="project" value="MGI"/>
</dbReference>
<dbReference type="GO" id="GO:1900227">
    <property type="term" value="P:positive regulation of NLRP3 inflammasome complex assembly"/>
    <property type="evidence" value="ECO:0000250"/>
    <property type="project" value="UniProtKB"/>
</dbReference>
<dbReference type="GO" id="GO:0048511">
    <property type="term" value="P:rhythmic process"/>
    <property type="evidence" value="ECO:0007669"/>
    <property type="project" value="UniProtKB-KW"/>
</dbReference>
<dbReference type="CDD" id="cd07850">
    <property type="entry name" value="STKc_JNK"/>
    <property type="match status" value="1"/>
</dbReference>
<dbReference type="FunFam" id="1.10.510.10:FF:000009">
    <property type="entry name" value="Mitogen-activated protein kinase"/>
    <property type="match status" value="1"/>
</dbReference>
<dbReference type="FunFam" id="3.30.200.20:FF:000210">
    <property type="entry name" value="Mitogen-activated protein kinase"/>
    <property type="match status" value="1"/>
</dbReference>
<dbReference type="Gene3D" id="3.30.200.20">
    <property type="entry name" value="Phosphorylase Kinase, domain 1"/>
    <property type="match status" value="1"/>
</dbReference>
<dbReference type="Gene3D" id="1.10.510.10">
    <property type="entry name" value="Transferase(Phosphotransferase) domain 1"/>
    <property type="match status" value="1"/>
</dbReference>
<dbReference type="InterPro" id="IPR011009">
    <property type="entry name" value="Kinase-like_dom_sf"/>
</dbReference>
<dbReference type="InterPro" id="IPR050117">
    <property type="entry name" value="MAP_kinase"/>
</dbReference>
<dbReference type="InterPro" id="IPR003527">
    <property type="entry name" value="MAP_kinase_CS"/>
</dbReference>
<dbReference type="InterPro" id="IPR008351">
    <property type="entry name" value="MAPK_JNK"/>
</dbReference>
<dbReference type="InterPro" id="IPR000719">
    <property type="entry name" value="Prot_kinase_dom"/>
</dbReference>
<dbReference type="InterPro" id="IPR008271">
    <property type="entry name" value="Ser/Thr_kinase_AS"/>
</dbReference>
<dbReference type="PANTHER" id="PTHR24055">
    <property type="entry name" value="MITOGEN-ACTIVATED PROTEIN KINASE"/>
    <property type="match status" value="1"/>
</dbReference>
<dbReference type="Pfam" id="PF00069">
    <property type="entry name" value="Pkinase"/>
    <property type="match status" value="1"/>
</dbReference>
<dbReference type="PRINTS" id="PR01772">
    <property type="entry name" value="JNKMAPKINASE"/>
</dbReference>
<dbReference type="SMART" id="SM00220">
    <property type="entry name" value="S_TKc"/>
    <property type="match status" value="1"/>
</dbReference>
<dbReference type="SUPFAM" id="SSF56112">
    <property type="entry name" value="Protein kinase-like (PK-like)"/>
    <property type="match status" value="1"/>
</dbReference>
<dbReference type="PROSITE" id="PS01351">
    <property type="entry name" value="MAPK"/>
    <property type="match status" value="1"/>
</dbReference>
<dbReference type="PROSITE" id="PS50011">
    <property type="entry name" value="PROTEIN_KINASE_DOM"/>
    <property type="match status" value="1"/>
</dbReference>
<dbReference type="PROSITE" id="PS00108">
    <property type="entry name" value="PROTEIN_KINASE_ST"/>
    <property type="match status" value="1"/>
</dbReference>
<evidence type="ECO:0000250" key="1"/>
<evidence type="ECO:0000250" key="2">
    <source>
        <dbReference type="UniProtKB" id="P45983"/>
    </source>
</evidence>
<evidence type="ECO:0000250" key="3">
    <source>
        <dbReference type="UniProtKB" id="P49185"/>
    </source>
</evidence>
<evidence type="ECO:0000250" key="4">
    <source>
        <dbReference type="UniProtKB" id="Q91Y86"/>
    </source>
</evidence>
<evidence type="ECO:0000255" key="5">
    <source>
        <dbReference type="PROSITE-ProRule" id="PRU00159"/>
    </source>
</evidence>
<evidence type="ECO:0000255" key="6">
    <source>
        <dbReference type="PROSITE-ProRule" id="PRU10027"/>
    </source>
</evidence>
<evidence type="ECO:0000269" key="7">
    <source>
    </source>
</evidence>
<evidence type="ECO:0000305" key="8"/>
<evidence type="ECO:0000312" key="9">
    <source>
        <dbReference type="EMBL" id="BAB11810.1"/>
    </source>
</evidence>
<feature type="chain" id="PRO_0000186265" description="Mitogen-activated protein kinase 8">
    <location>
        <begin position="1"/>
        <end position="384"/>
    </location>
</feature>
<feature type="domain" description="Protein kinase" evidence="5">
    <location>
        <begin position="26"/>
        <end position="321"/>
    </location>
</feature>
<feature type="short sequence motif" description="TXY">
    <location>
        <begin position="183"/>
        <end position="185"/>
    </location>
</feature>
<feature type="active site" description="Proton acceptor" evidence="5 6">
    <location>
        <position position="151"/>
    </location>
</feature>
<feature type="binding site" evidence="5">
    <location>
        <begin position="33"/>
        <end position="38"/>
    </location>
    <ligand>
        <name>ATP</name>
        <dbReference type="ChEBI" id="CHEBI:30616"/>
    </ligand>
</feature>
<feature type="binding site" evidence="5">
    <location>
        <position position="55"/>
    </location>
    <ligand>
        <name>ATP</name>
        <dbReference type="ChEBI" id="CHEBI:30616"/>
    </ligand>
</feature>
<feature type="modified residue" description="Phosphothreonine" evidence="1">
    <location>
        <position position="183"/>
    </location>
</feature>
<feature type="modified residue" description="Phosphotyrosine" evidence="1">
    <location>
        <position position="185"/>
    </location>
</feature>